<name>HERP2_DANRE</name>
<reference key="1">
    <citation type="submission" date="2004-02" db="EMBL/GenBank/DDBJ databases">
        <authorList>
            <consortium name="NIH - Zebrafish Gene Collection (ZGC) project"/>
        </authorList>
    </citation>
    <scope>NUCLEOTIDE SEQUENCE [LARGE SCALE MRNA]</scope>
    <source>
        <strain>AB</strain>
        <tissue>Kidney</tissue>
    </source>
</reference>
<keyword id="KW-0472">Membrane</keyword>
<keyword id="KW-1185">Reference proteome</keyword>
<keyword id="KW-0812">Transmembrane</keyword>
<keyword id="KW-1133">Transmembrane helix</keyword>
<keyword id="KW-0834">Unfolded protein response</keyword>
<evidence type="ECO:0000250" key="1"/>
<evidence type="ECO:0000255" key="2"/>
<evidence type="ECO:0000255" key="3">
    <source>
        <dbReference type="PROSITE-ProRule" id="PRU00214"/>
    </source>
</evidence>
<evidence type="ECO:0000256" key="4">
    <source>
        <dbReference type="SAM" id="MobiDB-lite"/>
    </source>
</evidence>
<evidence type="ECO:0000305" key="5"/>
<feature type="chain" id="PRO_0000280630" description="Homocysteine-responsive endoplasmic reticulum-resident ubiquitin-like domain member 2 protein">
    <location>
        <begin position="1"/>
        <end position="397"/>
    </location>
</feature>
<feature type="transmembrane region" description="Helical" evidence="2">
    <location>
        <begin position="293"/>
        <end position="313"/>
    </location>
</feature>
<feature type="domain" description="Ubiquitin-like" evidence="3">
    <location>
        <begin position="10"/>
        <end position="89"/>
    </location>
</feature>
<feature type="region of interest" description="Disordered" evidence="4">
    <location>
        <begin position="87"/>
        <end position="166"/>
    </location>
</feature>
<feature type="region of interest" description="Disordered" evidence="4">
    <location>
        <begin position="210"/>
        <end position="246"/>
    </location>
</feature>
<feature type="region of interest" description="Disordered" evidence="4">
    <location>
        <begin position="344"/>
        <end position="373"/>
    </location>
</feature>
<feature type="compositionally biased region" description="Low complexity" evidence="4">
    <location>
        <begin position="88"/>
        <end position="123"/>
    </location>
</feature>
<feature type="compositionally biased region" description="Low complexity" evidence="4">
    <location>
        <begin position="210"/>
        <end position="220"/>
    </location>
</feature>
<feature type="compositionally biased region" description="Acidic residues" evidence="4">
    <location>
        <begin position="345"/>
        <end position="360"/>
    </location>
</feature>
<feature type="sequence conflict" description="In Ref. 1; AAH45865." evidence="5" ref="1">
    <original>K</original>
    <variation>E</variation>
    <location>
        <position position="36"/>
    </location>
</feature>
<feature type="sequence conflict" description="In Ref. 1; AAH45865." evidence="5" ref="1">
    <original>S</original>
    <variation>T</variation>
    <location>
        <position position="97"/>
    </location>
</feature>
<feature type="sequence conflict" description="In Ref. 1; AAH45865." evidence="5" ref="1">
    <original>T</original>
    <variation>A</variation>
    <location>
        <position position="173"/>
    </location>
</feature>
<feature type="sequence conflict" description="In Ref. 1; AAH45865." evidence="5" ref="1">
    <original>A</original>
    <variation>P</variation>
    <location>
        <position position="217"/>
    </location>
</feature>
<comment type="function">
    <text evidence="1">Could be involved in the unfolded protein response (UPR) pathway.</text>
</comment>
<comment type="subcellular location">
    <subcellularLocation>
        <location evidence="5">Membrane</location>
        <topology evidence="5">Single-pass membrane protein</topology>
    </subcellularLocation>
</comment>
<sequence length="397" mass="43730">MDQGTVDSPVTLVIKAPNQKYDDQTINCFLNWTVEKLKKHISNVYPSKPLSKDQRLVYSGRLLQDHLQLRDVLRKQDEYHMVHLVCASRSPPSSPTSDSHFSTTDSSSSTSDSAGPSLSSTPSQEAQANSDGLRHRGNPAATHGLNPAPTGVMQRPEGMPLPMQGGPAAGFPTHPMYMPMQMFWWQQMYARHYYVQYQAAIAASRASSVAPSPSLSAGPATQPVQPNEPAAPMGPNPAPEDRPANPNIQMNAQGGAMLNDDELNRDWLDWMYTVSRAAILLSIVYFYSSFGRFVMVIGAMLLVYLHQAGWFPFRAELQNPRAEEGAQDEADQNQDMQEMERMMDEGIEDDEGDSGEEGPDDPMNPGPHQPGFLSATWSFISTFFTSLIPEGPPQAAN</sequence>
<organism>
    <name type="scientific">Danio rerio</name>
    <name type="common">Zebrafish</name>
    <name type="synonym">Brachydanio rerio</name>
    <dbReference type="NCBI Taxonomy" id="7955"/>
    <lineage>
        <taxon>Eukaryota</taxon>
        <taxon>Metazoa</taxon>
        <taxon>Chordata</taxon>
        <taxon>Craniata</taxon>
        <taxon>Vertebrata</taxon>
        <taxon>Euteleostomi</taxon>
        <taxon>Actinopterygii</taxon>
        <taxon>Neopterygii</taxon>
        <taxon>Teleostei</taxon>
        <taxon>Ostariophysi</taxon>
        <taxon>Cypriniformes</taxon>
        <taxon>Danionidae</taxon>
        <taxon>Danioninae</taxon>
        <taxon>Danio</taxon>
    </lineage>
</organism>
<accession>Q6NYI0</accession>
<accession>Q7ZVH0</accession>
<protein>
    <recommendedName>
        <fullName>Homocysteine-responsive endoplasmic reticulum-resident ubiquitin-like domain member 2 protein</fullName>
    </recommendedName>
</protein>
<dbReference type="EMBL" id="BC045865">
    <property type="protein sequence ID" value="AAH45865.1"/>
    <property type="molecule type" value="mRNA"/>
</dbReference>
<dbReference type="EMBL" id="BC066585">
    <property type="protein sequence ID" value="AAH66585.1"/>
    <property type="molecule type" value="mRNA"/>
</dbReference>
<dbReference type="RefSeq" id="NP_956482.1">
    <property type="nucleotide sequence ID" value="NM_200188.1"/>
</dbReference>
<dbReference type="SMR" id="Q6NYI0"/>
<dbReference type="FunCoup" id="Q6NYI0">
    <property type="interactions" value="1855"/>
</dbReference>
<dbReference type="STRING" id="7955.ENSDARP00000038769"/>
<dbReference type="PaxDb" id="7955-ENSDARP00000038769"/>
<dbReference type="GeneID" id="393157"/>
<dbReference type="KEGG" id="dre:393157"/>
<dbReference type="AGR" id="ZFIN:ZDB-GENE-040426-868"/>
<dbReference type="CTD" id="64224"/>
<dbReference type="ZFIN" id="ZDB-GENE-040426-868">
    <property type="gene designation" value="herpud2"/>
</dbReference>
<dbReference type="eggNOG" id="KOG4583">
    <property type="taxonomic scope" value="Eukaryota"/>
</dbReference>
<dbReference type="InParanoid" id="Q6NYI0"/>
<dbReference type="OrthoDB" id="21589at2759"/>
<dbReference type="PhylomeDB" id="Q6NYI0"/>
<dbReference type="PRO" id="PR:Q6NYI0"/>
<dbReference type="Proteomes" id="UP000000437">
    <property type="component" value="Chromosome 16"/>
</dbReference>
<dbReference type="GO" id="GO:0016020">
    <property type="term" value="C:membrane"/>
    <property type="evidence" value="ECO:0007669"/>
    <property type="project" value="UniProtKB-SubCell"/>
</dbReference>
<dbReference type="GO" id="GO:0030968">
    <property type="term" value="P:endoplasmic reticulum unfolded protein response"/>
    <property type="evidence" value="ECO:0000318"/>
    <property type="project" value="GO_Central"/>
</dbReference>
<dbReference type="CDD" id="cd17119">
    <property type="entry name" value="Ubl_HERP2"/>
    <property type="match status" value="1"/>
</dbReference>
<dbReference type="FunFam" id="3.10.20.90:FF:000046">
    <property type="entry name" value="Homocysteine-responsive endoplasmic reticulum-resident ubiquitin-like domain member 2 protein"/>
    <property type="match status" value="1"/>
</dbReference>
<dbReference type="Gene3D" id="3.10.20.90">
    <property type="entry name" value="Phosphatidylinositol 3-kinase Catalytic Subunit, Chain A, domain 1"/>
    <property type="match status" value="1"/>
</dbReference>
<dbReference type="InterPro" id="IPR039751">
    <property type="entry name" value="HERPUD1/2"/>
</dbReference>
<dbReference type="InterPro" id="IPR000626">
    <property type="entry name" value="Ubiquitin-like_dom"/>
</dbReference>
<dbReference type="InterPro" id="IPR029071">
    <property type="entry name" value="Ubiquitin-like_domsf"/>
</dbReference>
<dbReference type="PANTHER" id="PTHR12943:SF5">
    <property type="entry name" value="HOMOCYSTEINE-RESPONSIVE ENDOPLASMIC RETICULUM-RESIDENT UBIQUITIN-LIKE DOMAIN MEMBER 2 PROTEIN"/>
    <property type="match status" value="1"/>
</dbReference>
<dbReference type="PANTHER" id="PTHR12943">
    <property type="entry name" value="HOMOCYSTEINE-RESPONSIVE ENDOPLASMIC RETICULUM-RESIDENT UNIQUITIN-LIKE DOMAIN HERPUD PROTEIN FAMILY MEMBER"/>
    <property type="match status" value="1"/>
</dbReference>
<dbReference type="Pfam" id="PF00240">
    <property type="entry name" value="ubiquitin"/>
    <property type="match status" value="1"/>
</dbReference>
<dbReference type="SMART" id="SM00213">
    <property type="entry name" value="UBQ"/>
    <property type="match status" value="1"/>
</dbReference>
<dbReference type="SUPFAM" id="SSF54236">
    <property type="entry name" value="Ubiquitin-like"/>
    <property type="match status" value="1"/>
</dbReference>
<dbReference type="PROSITE" id="PS50053">
    <property type="entry name" value="UBIQUITIN_2"/>
    <property type="match status" value="1"/>
</dbReference>
<proteinExistence type="evidence at transcript level"/>
<gene>
    <name type="primary">herpud2</name>
    <name type="ORF">zgc:56020</name>
    <name type="ORF">zgc:76968</name>
</gene>